<comment type="function">
    <text evidence="1">One of the primary rRNA binding proteins, it binds directly to 16S rRNA where it nucleates assembly of the body of the 30S subunit.</text>
</comment>
<comment type="function">
    <text evidence="1">With S5 and S12 plays an important role in translational accuracy.</text>
</comment>
<comment type="subunit">
    <text evidence="1">Part of the 30S ribosomal subunit. Contacts protein S5. The interaction surface between S4 and S5 is involved in control of translational fidelity.</text>
</comment>
<comment type="similarity">
    <text evidence="1">Belongs to the universal ribosomal protein uS4 family.</text>
</comment>
<name>RS4_YERPP</name>
<protein>
    <recommendedName>
        <fullName evidence="1">Small ribosomal subunit protein uS4</fullName>
    </recommendedName>
    <alternativeName>
        <fullName evidence="2">30S ribosomal protein S4</fullName>
    </alternativeName>
</protein>
<keyword id="KW-0687">Ribonucleoprotein</keyword>
<keyword id="KW-0689">Ribosomal protein</keyword>
<keyword id="KW-0694">RNA-binding</keyword>
<keyword id="KW-0699">rRNA-binding</keyword>
<sequence>MARYLGPKLKLSRREGTDLFLKSGVRAIDTKCKIEQPPGQHGARKPRLSDYGVQLREKQKVRRIYGVLERQFRNYYKEAARLKGNTGANLLQLLEGRLDNVVYRMGFGATRAESRQLVSHKAIMVNGRVVNIASYQVSPNDVVSIREKAKKQSRVKAALELAEQREKPTWLEVDAVKMEGVFKRIPERTDLSADINEHLIVELYSK</sequence>
<gene>
    <name evidence="1" type="primary">rpsD</name>
    <name type="ordered locus">YPDSF_0155</name>
</gene>
<reference key="1">
    <citation type="submission" date="2007-02" db="EMBL/GenBank/DDBJ databases">
        <title>Complete sequence of chromosome of Yersinia pestis Pestoides F.</title>
        <authorList>
            <consortium name="US DOE Joint Genome Institute"/>
            <person name="Copeland A."/>
            <person name="Lucas S."/>
            <person name="Lapidus A."/>
            <person name="Barry K."/>
            <person name="Detter J.C."/>
            <person name="Glavina del Rio T."/>
            <person name="Hammon N."/>
            <person name="Israni S."/>
            <person name="Dalin E."/>
            <person name="Tice H."/>
            <person name="Pitluck S."/>
            <person name="Di Bartolo G."/>
            <person name="Chain P."/>
            <person name="Malfatti S."/>
            <person name="Shin M."/>
            <person name="Vergez L."/>
            <person name="Schmutz J."/>
            <person name="Larimer F."/>
            <person name="Land M."/>
            <person name="Hauser L."/>
            <person name="Worsham P."/>
            <person name="Chu M."/>
            <person name="Bearden S."/>
            <person name="Garcia E."/>
            <person name="Richardson P."/>
        </authorList>
    </citation>
    <scope>NUCLEOTIDE SEQUENCE [LARGE SCALE GENOMIC DNA]</scope>
    <source>
        <strain>Pestoides F</strain>
    </source>
</reference>
<proteinExistence type="inferred from homology"/>
<dbReference type="EMBL" id="CP000668">
    <property type="protein sequence ID" value="ABP38577.1"/>
    <property type="molecule type" value="Genomic_DNA"/>
</dbReference>
<dbReference type="RefSeq" id="WP_002218949.1">
    <property type="nucleotide sequence ID" value="NZ_CP009715.1"/>
</dbReference>
<dbReference type="SMR" id="A4TH14"/>
<dbReference type="GeneID" id="97454255"/>
<dbReference type="KEGG" id="ypp:YPDSF_0155"/>
<dbReference type="PATRIC" id="fig|386656.14.peg.410"/>
<dbReference type="GO" id="GO:0015935">
    <property type="term" value="C:small ribosomal subunit"/>
    <property type="evidence" value="ECO:0007669"/>
    <property type="project" value="InterPro"/>
</dbReference>
<dbReference type="GO" id="GO:0019843">
    <property type="term" value="F:rRNA binding"/>
    <property type="evidence" value="ECO:0007669"/>
    <property type="project" value="UniProtKB-UniRule"/>
</dbReference>
<dbReference type="GO" id="GO:0003735">
    <property type="term" value="F:structural constituent of ribosome"/>
    <property type="evidence" value="ECO:0007669"/>
    <property type="project" value="InterPro"/>
</dbReference>
<dbReference type="GO" id="GO:0042274">
    <property type="term" value="P:ribosomal small subunit biogenesis"/>
    <property type="evidence" value="ECO:0007669"/>
    <property type="project" value="TreeGrafter"/>
</dbReference>
<dbReference type="GO" id="GO:0006412">
    <property type="term" value="P:translation"/>
    <property type="evidence" value="ECO:0007669"/>
    <property type="project" value="UniProtKB-UniRule"/>
</dbReference>
<dbReference type="CDD" id="cd00165">
    <property type="entry name" value="S4"/>
    <property type="match status" value="1"/>
</dbReference>
<dbReference type="FunFam" id="1.10.1050.10:FF:000001">
    <property type="entry name" value="30S ribosomal protein S4"/>
    <property type="match status" value="1"/>
</dbReference>
<dbReference type="FunFam" id="3.10.290.10:FF:000001">
    <property type="entry name" value="30S ribosomal protein S4"/>
    <property type="match status" value="1"/>
</dbReference>
<dbReference type="Gene3D" id="1.10.1050.10">
    <property type="entry name" value="Ribosomal Protein S4 Delta 41, Chain A, domain 1"/>
    <property type="match status" value="1"/>
</dbReference>
<dbReference type="Gene3D" id="3.10.290.10">
    <property type="entry name" value="RNA-binding S4 domain"/>
    <property type="match status" value="1"/>
</dbReference>
<dbReference type="HAMAP" id="MF_01306_B">
    <property type="entry name" value="Ribosomal_uS4_B"/>
    <property type="match status" value="1"/>
</dbReference>
<dbReference type="InterPro" id="IPR022801">
    <property type="entry name" value="Ribosomal_uS4"/>
</dbReference>
<dbReference type="InterPro" id="IPR005709">
    <property type="entry name" value="Ribosomal_uS4_bac-type"/>
</dbReference>
<dbReference type="InterPro" id="IPR018079">
    <property type="entry name" value="Ribosomal_uS4_CS"/>
</dbReference>
<dbReference type="InterPro" id="IPR001912">
    <property type="entry name" value="Ribosomal_uS4_N"/>
</dbReference>
<dbReference type="InterPro" id="IPR002942">
    <property type="entry name" value="S4_RNA-bd"/>
</dbReference>
<dbReference type="InterPro" id="IPR036986">
    <property type="entry name" value="S4_RNA-bd_sf"/>
</dbReference>
<dbReference type="NCBIfam" id="NF003717">
    <property type="entry name" value="PRK05327.1"/>
    <property type="match status" value="1"/>
</dbReference>
<dbReference type="NCBIfam" id="TIGR01017">
    <property type="entry name" value="rpsD_bact"/>
    <property type="match status" value="1"/>
</dbReference>
<dbReference type="PANTHER" id="PTHR11831">
    <property type="entry name" value="30S 40S RIBOSOMAL PROTEIN"/>
    <property type="match status" value="1"/>
</dbReference>
<dbReference type="PANTHER" id="PTHR11831:SF4">
    <property type="entry name" value="SMALL RIBOSOMAL SUBUNIT PROTEIN US4M"/>
    <property type="match status" value="1"/>
</dbReference>
<dbReference type="Pfam" id="PF00163">
    <property type="entry name" value="Ribosomal_S4"/>
    <property type="match status" value="1"/>
</dbReference>
<dbReference type="Pfam" id="PF01479">
    <property type="entry name" value="S4"/>
    <property type="match status" value="1"/>
</dbReference>
<dbReference type="SMART" id="SM01390">
    <property type="entry name" value="Ribosomal_S4"/>
    <property type="match status" value="1"/>
</dbReference>
<dbReference type="SMART" id="SM00363">
    <property type="entry name" value="S4"/>
    <property type="match status" value="1"/>
</dbReference>
<dbReference type="SUPFAM" id="SSF55174">
    <property type="entry name" value="Alpha-L RNA-binding motif"/>
    <property type="match status" value="1"/>
</dbReference>
<dbReference type="PROSITE" id="PS00632">
    <property type="entry name" value="RIBOSOMAL_S4"/>
    <property type="match status" value="1"/>
</dbReference>
<dbReference type="PROSITE" id="PS50889">
    <property type="entry name" value="S4"/>
    <property type="match status" value="1"/>
</dbReference>
<organism>
    <name type="scientific">Yersinia pestis (strain Pestoides F)</name>
    <dbReference type="NCBI Taxonomy" id="386656"/>
    <lineage>
        <taxon>Bacteria</taxon>
        <taxon>Pseudomonadati</taxon>
        <taxon>Pseudomonadota</taxon>
        <taxon>Gammaproteobacteria</taxon>
        <taxon>Enterobacterales</taxon>
        <taxon>Yersiniaceae</taxon>
        <taxon>Yersinia</taxon>
    </lineage>
</organism>
<evidence type="ECO:0000255" key="1">
    <source>
        <dbReference type="HAMAP-Rule" id="MF_01306"/>
    </source>
</evidence>
<evidence type="ECO:0000305" key="2"/>
<feature type="chain" id="PRO_0000322352" description="Small ribosomal subunit protein uS4">
    <location>
        <begin position="1"/>
        <end position="206"/>
    </location>
</feature>
<feature type="domain" description="S4 RNA-binding" evidence="1">
    <location>
        <begin position="96"/>
        <end position="156"/>
    </location>
</feature>
<accession>A4TH14</accession>